<sequence length="64" mass="7362">MPKMKTHSGAKKRFKLTGTGKLKRQQANRRHYLEHKSSRLTRRLAGDKLVFKGDAKVIKKMLGV</sequence>
<feature type="chain" id="PRO_1000050654" description="Large ribosomal subunit protein bL35">
    <location>
        <begin position="1"/>
        <end position="64"/>
    </location>
</feature>
<feature type="region of interest" description="Disordered" evidence="2">
    <location>
        <begin position="1"/>
        <end position="31"/>
    </location>
</feature>
<comment type="similarity">
    <text evidence="1">Belongs to the bacterial ribosomal protein bL35 family.</text>
</comment>
<evidence type="ECO:0000255" key="1">
    <source>
        <dbReference type="HAMAP-Rule" id="MF_00514"/>
    </source>
</evidence>
<evidence type="ECO:0000256" key="2">
    <source>
        <dbReference type="SAM" id="MobiDB-lite"/>
    </source>
</evidence>
<evidence type="ECO:0000305" key="3"/>
<reference key="1">
    <citation type="journal article" date="2006" name="PLoS Genet.">
        <title>Secrets of soil survival revealed by the genome sequence of Arthrobacter aurescens TC1.</title>
        <authorList>
            <person name="Mongodin E.F."/>
            <person name="Shapir N."/>
            <person name="Daugherty S.C."/>
            <person name="DeBoy R.T."/>
            <person name="Emerson J.B."/>
            <person name="Shvartzbeyn A."/>
            <person name="Radune D."/>
            <person name="Vamathevan J."/>
            <person name="Riggs F."/>
            <person name="Grinberg V."/>
            <person name="Khouri H.M."/>
            <person name="Wackett L.P."/>
            <person name="Nelson K.E."/>
            <person name="Sadowsky M.J."/>
        </authorList>
    </citation>
    <scope>NUCLEOTIDE SEQUENCE [LARGE SCALE GENOMIC DNA]</scope>
    <source>
        <strain>TC1</strain>
    </source>
</reference>
<protein>
    <recommendedName>
        <fullName evidence="1">Large ribosomal subunit protein bL35</fullName>
    </recommendedName>
    <alternativeName>
        <fullName evidence="3">50S ribosomal protein L35</fullName>
    </alternativeName>
</protein>
<proteinExistence type="inferred from homology"/>
<dbReference type="EMBL" id="CP000474">
    <property type="protein sequence ID" value="ABM07988.1"/>
    <property type="molecule type" value="Genomic_DNA"/>
</dbReference>
<dbReference type="RefSeq" id="WP_011774324.1">
    <property type="nucleotide sequence ID" value="NC_008711.1"/>
</dbReference>
<dbReference type="SMR" id="A1R567"/>
<dbReference type="STRING" id="290340.AAur_1613"/>
<dbReference type="GeneID" id="97300531"/>
<dbReference type="KEGG" id="aau:AAur_1613"/>
<dbReference type="eggNOG" id="COG0291">
    <property type="taxonomic scope" value="Bacteria"/>
</dbReference>
<dbReference type="HOGENOM" id="CLU_169643_4_2_11"/>
<dbReference type="OrthoDB" id="9804851at2"/>
<dbReference type="Proteomes" id="UP000000637">
    <property type="component" value="Chromosome"/>
</dbReference>
<dbReference type="GO" id="GO:0022625">
    <property type="term" value="C:cytosolic large ribosomal subunit"/>
    <property type="evidence" value="ECO:0007669"/>
    <property type="project" value="TreeGrafter"/>
</dbReference>
<dbReference type="GO" id="GO:0003735">
    <property type="term" value="F:structural constituent of ribosome"/>
    <property type="evidence" value="ECO:0007669"/>
    <property type="project" value="InterPro"/>
</dbReference>
<dbReference type="GO" id="GO:0006412">
    <property type="term" value="P:translation"/>
    <property type="evidence" value="ECO:0007669"/>
    <property type="project" value="UniProtKB-UniRule"/>
</dbReference>
<dbReference type="FunFam" id="4.10.410.60:FF:000001">
    <property type="entry name" value="50S ribosomal protein L35"/>
    <property type="match status" value="1"/>
</dbReference>
<dbReference type="Gene3D" id="4.10.410.60">
    <property type="match status" value="1"/>
</dbReference>
<dbReference type="HAMAP" id="MF_00514">
    <property type="entry name" value="Ribosomal_bL35"/>
    <property type="match status" value="1"/>
</dbReference>
<dbReference type="InterPro" id="IPR001706">
    <property type="entry name" value="Ribosomal_bL35"/>
</dbReference>
<dbReference type="InterPro" id="IPR021137">
    <property type="entry name" value="Ribosomal_bL35-like"/>
</dbReference>
<dbReference type="InterPro" id="IPR018265">
    <property type="entry name" value="Ribosomal_bL35_CS"/>
</dbReference>
<dbReference type="InterPro" id="IPR037229">
    <property type="entry name" value="Ribosomal_bL35_sf"/>
</dbReference>
<dbReference type="NCBIfam" id="TIGR00001">
    <property type="entry name" value="rpmI_bact"/>
    <property type="match status" value="1"/>
</dbReference>
<dbReference type="PANTHER" id="PTHR33343">
    <property type="entry name" value="54S RIBOSOMAL PROTEIN BL35M"/>
    <property type="match status" value="1"/>
</dbReference>
<dbReference type="PANTHER" id="PTHR33343:SF1">
    <property type="entry name" value="LARGE RIBOSOMAL SUBUNIT PROTEIN BL35M"/>
    <property type="match status" value="1"/>
</dbReference>
<dbReference type="Pfam" id="PF01632">
    <property type="entry name" value="Ribosomal_L35p"/>
    <property type="match status" value="1"/>
</dbReference>
<dbReference type="PRINTS" id="PR00064">
    <property type="entry name" value="RIBOSOMALL35"/>
</dbReference>
<dbReference type="SUPFAM" id="SSF143034">
    <property type="entry name" value="L35p-like"/>
    <property type="match status" value="1"/>
</dbReference>
<dbReference type="PROSITE" id="PS00936">
    <property type="entry name" value="RIBOSOMAL_L35"/>
    <property type="match status" value="1"/>
</dbReference>
<accession>A1R567</accession>
<organism>
    <name type="scientific">Paenarthrobacter aurescens (strain TC1)</name>
    <dbReference type="NCBI Taxonomy" id="290340"/>
    <lineage>
        <taxon>Bacteria</taxon>
        <taxon>Bacillati</taxon>
        <taxon>Actinomycetota</taxon>
        <taxon>Actinomycetes</taxon>
        <taxon>Micrococcales</taxon>
        <taxon>Micrococcaceae</taxon>
        <taxon>Paenarthrobacter</taxon>
    </lineage>
</organism>
<name>RL35_PAEAT</name>
<keyword id="KW-0687">Ribonucleoprotein</keyword>
<keyword id="KW-0689">Ribosomal protein</keyword>
<gene>
    <name evidence="1" type="primary">rpmI</name>
    <name type="ordered locus">AAur_1613</name>
</gene>